<gene>
    <name evidence="2" type="primary">nuoB</name>
    <name type="ordered locus">Pnap_1425</name>
</gene>
<comment type="function">
    <text evidence="1">NDH-1 shuttles electrons from NADH, via FMN and iron-sulfur (Fe-S) centers, to quinones in the respiratory chain. Couples the redox reaction to proton translocation (for every two electrons transferred, four hydrogen ions are translocated across the cytoplasmic membrane), and thus conserves the redox energy in a proton gradient (By similarity).</text>
</comment>
<comment type="catalytic activity">
    <reaction evidence="2">
        <text>a quinone + NADH + 5 H(+)(in) = a quinol + NAD(+) + 4 H(+)(out)</text>
        <dbReference type="Rhea" id="RHEA:57888"/>
        <dbReference type="ChEBI" id="CHEBI:15378"/>
        <dbReference type="ChEBI" id="CHEBI:24646"/>
        <dbReference type="ChEBI" id="CHEBI:57540"/>
        <dbReference type="ChEBI" id="CHEBI:57945"/>
        <dbReference type="ChEBI" id="CHEBI:132124"/>
    </reaction>
</comment>
<comment type="cofactor">
    <cofactor evidence="2">
        <name>[4Fe-4S] cluster</name>
        <dbReference type="ChEBI" id="CHEBI:49883"/>
    </cofactor>
    <text evidence="2">Binds 1 [4Fe-4S] cluster.</text>
</comment>
<comment type="subunit">
    <text evidence="2">NDH-1 is composed of 14 different subunits. Subunits NuoB, C, D, E, F, and G constitute the peripheral sector of the complex.</text>
</comment>
<comment type="subcellular location">
    <subcellularLocation>
        <location evidence="2">Cell inner membrane</location>
        <topology evidence="2">Peripheral membrane protein</topology>
        <orientation evidence="2">Cytoplasmic side</orientation>
    </subcellularLocation>
</comment>
<comment type="similarity">
    <text evidence="2">Belongs to the complex I 20 kDa subunit family.</text>
</comment>
<reference key="1">
    <citation type="journal article" date="2009" name="Environ. Microbiol.">
        <title>The genome of Polaromonas naphthalenivorans strain CJ2, isolated from coal tar-contaminated sediment, reveals physiological and metabolic versatility and evolution through extensive horizontal gene transfer.</title>
        <authorList>
            <person name="Yagi J.M."/>
            <person name="Sims D."/>
            <person name="Brettin T."/>
            <person name="Bruce D."/>
            <person name="Madsen E.L."/>
        </authorList>
    </citation>
    <scope>NUCLEOTIDE SEQUENCE [LARGE SCALE GENOMIC DNA]</scope>
    <source>
        <strain>CJ2</strain>
    </source>
</reference>
<accession>A1VM61</accession>
<keyword id="KW-0004">4Fe-4S</keyword>
<keyword id="KW-0997">Cell inner membrane</keyword>
<keyword id="KW-1003">Cell membrane</keyword>
<keyword id="KW-0408">Iron</keyword>
<keyword id="KW-0411">Iron-sulfur</keyword>
<keyword id="KW-0472">Membrane</keyword>
<keyword id="KW-0479">Metal-binding</keyword>
<keyword id="KW-0520">NAD</keyword>
<keyword id="KW-0874">Quinone</keyword>
<keyword id="KW-1185">Reference proteome</keyword>
<keyword id="KW-1278">Translocase</keyword>
<keyword id="KW-0813">Transport</keyword>
<keyword id="KW-0830">Ubiquinone</keyword>
<evidence type="ECO:0000250" key="1"/>
<evidence type="ECO:0000255" key="2">
    <source>
        <dbReference type="HAMAP-Rule" id="MF_01356"/>
    </source>
</evidence>
<name>NUOB_POLNA</name>
<dbReference type="EC" id="7.1.1.-" evidence="2"/>
<dbReference type="EMBL" id="CP000529">
    <property type="protein sequence ID" value="ABM36739.1"/>
    <property type="molecule type" value="Genomic_DNA"/>
</dbReference>
<dbReference type="RefSeq" id="WP_011800826.1">
    <property type="nucleotide sequence ID" value="NC_008781.1"/>
</dbReference>
<dbReference type="SMR" id="A1VM61"/>
<dbReference type="STRING" id="365044.Pnap_1425"/>
<dbReference type="KEGG" id="pna:Pnap_1425"/>
<dbReference type="eggNOG" id="COG0377">
    <property type="taxonomic scope" value="Bacteria"/>
</dbReference>
<dbReference type="HOGENOM" id="CLU_055737_7_3_4"/>
<dbReference type="OrthoDB" id="9786737at2"/>
<dbReference type="Proteomes" id="UP000000644">
    <property type="component" value="Chromosome"/>
</dbReference>
<dbReference type="GO" id="GO:0005886">
    <property type="term" value="C:plasma membrane"/>
    <property type="evidence" value="ECO:0007669"/>
    <property type="project" value="UniProtKB-SubCell"/>
</dbReference>
<dbReference type="GO" id="GO:0045271">
    <property type="term" value="C:respiratory chain complex I"/>
    <property type="evidence" value="ECO:0007669"/>
    <property type="project" value="TreeGrafter"/>
</dbReference>
<dbReference type="GO" id="GO:0051539">
    <property type="term" value="F:4 iron, 4 sulfur cluster binding"/>
    <property type="evidence" value="ECO:0007669"/>
    <property type="project" value="UniProtKB-KW"/>
</dbReference>
<dbReference type="GO" id="GO:0005506">
    <property type="term" value="F:iron ion binding"/>
    <property type="evidence" value="ECO:0007669"/>
    <property type="project" value="UniProtKB-UniRule"/>
</dbReference>
<dbReference type="GO" id="GO:0008137">
    <property type="term" value="F:NADH dehydrogenase (ubiquinone) activity"/>
    <property type="evidence" value="ECO:0007669"/>
    <property type="project" value="InterPro"/>
</dbReference>
<dbReference type="GO" id="GO:0050136">
    <property type="term" value="F:NADH:ubiquinone reductase (non-electrogenic) activity"/>
    <property type="evidence" value="ECO:0007669"/>
    <property type="project" value="UniProtKB-UniRule"/>
</dbReference>
<dbReference type="GO" id="GO:0048038">
    <property type="term" value="F:quinone binding"/>
    <property type="evidence" value="ECO:0007669"/>
    <property type="project" value="UniProtKB-KW"/>
</dbReference>
<dbReference type="GO" id="GO:0009060">
    <property type="term" value="P:aerobic respiration"/>
    <property type="evidence" value="ECO:0007669"/>
    <property type="project" value="TreeGrafter"/>
</dbReference>
<dbReference type="GO" id="GO:0015990">
    <property type="term" value="P:electron transport coupled proton transport"/>
    <property type="evidence" value="ECO:0007669"/>
    <property type="project" value="TreeGrafter"/>
</dbReference>
<dbReference type="FunFam" id="3.40.50.12280:FF:000001">
    <property type="entry name" value="NADH-quinone oxidoreductase subunit B 2"/>
    <property type="match status" value="1"/>
</dbReference>
<dbReference type="Gene3D" id="3.40.50.12280">
    <property type="match status" value="1"/>
</dbReference>
<dbReference type="HAMAP" id="MF_01356">
    <property type="entry name" value="NDH1_NuoB"/>
    <property type="match status" value="1"/>
</dbReference>
<dbReference type="InterPro" id="IPR006137">
    <property type="entry name" value="NADH_UbQ_OxRdtase-like_20kDa"/>
</dbReference>
<dbReference type="InterPro" id="IPR006138">
    <property type="entry name" value="NADH_UQ_OxRdtase_20Kd_su"/>
</dbReference>
<dbReference type="NCBIfam" id="TIGR01957">
    <property type="entry name" value="nuoB_fam"/>
    <property type="match status" value="1"/>
</dbReference>
<dbReference type="NCBIfam" id="NF005012">
    <property type="entry name" value="PRK06411.1"/>
    <property type="match status" value="1"/>
</dbReference>
<dbReference type="PANTHER" id="PTHR11995">
    <property type="entry name" value="NADH DEHYDROGENASE"/>
    <property type="match status" value="1"/>
</dbReference>
<dbReference type="PANTHER" id="PTHR11995:SF14">
    <property type="entry name" value="NADH DEHYDROGENASE [UBIQUINONE] IRON-SULFUR PROTEIN 7, MITOCHONDRIAL"/>
    <property type="match status" value="1"/>
</dbReference>
<dbReference type="Pfam" id="PF01058">
    <property type="entry name" value="Oxidored_q6"/>
    <property type="match status" value="1"/>
</dbReference>
<dbReference type="SUPFAM" id="SSF56770">
    <property type="entry name" value="HydA/Nqo6-like"/>
    <property type="match status" value="1"/>
</dbReference>
<dbReference type="PROSITE" id="PS01150">
    <property type="entry name" value="COMPLEX1_20K"/>
    <property type="match status" value="1"/>
</dbReference>
<proteinExistence type="inferred from homology"/>
<protein>
    <recommendedName>
        <fullName evidence="2">NADH-quinone oxidoreductase subunit B</fullName>
        <ecNumber evidence="2">7.1.1.-</ecNumber>
    </recommendedName>
    <alternativeName>
        <fullName evidence="2">NADH dehydrogenase I subunit B</fullName>
    </alternativeName>
    <alternativeName>
        <fullName evidence="2">NDH-1 subunit B</fullName>
    </alternativeName>
</protein>
<organism>
    <name type="scientific">Polaromonas naphthalenivorans (strain CJ2)</name>
    <dbReference type="NCBI Taxonomy" id="365044"/>
    <lineage>
        <taxon>Bacteria</taxon>
        <taxon>Pseudomonadati</taxon>
        <taxon>Pseudomonadota</taxon>
        <taxon>Betaproteobacteria</taxon>
        <taxon>Burkholderiales</taxon>
        <taxon>Comamonadaceae</taxon>
        <taxon>Polaromonas</taxon>
    </lineage>
</organism>
<feature type="chain" id="PRO_0000358444" description="NADH-quinone oxidoreductase subunit B">
    <location>
        <begin position="1"/>
        <end position="159"/>
    </location>
</feature>
<feature type="binding site" evidence="2">
    <location>
        <position position="37"/>
    </location>
    <ligand>
        <name>[4Fe-4S] cluster</name>
        <dbReference type="ChEBI" id="CHEBI:49883"/>
    </ligand>
</feature>
<feature type="binding site" evidence="2">
    <location>
        <position position="38"/>
    </location>
    <ligand>
        <name>[4Fe-4S] cluster</name>
        <dbReference type="ChEBI" id="CHEBI:49883"/>
    </ligand>
</feature>
<feature type="binding site" evidence="2">
    <location>
        <position position="102"/>
    </location>
    <ligand>
        <name>[4Fe-4S] cluster</name>
        <dbReference type="ChEBI" id="CHEBI:49883"/>
    </ligand>
</feature>
<feature type="binding site" evidence="2">
    <location>
        <position position="132"/>
    </location>
    <ligand>
        <name>[4Fe-4S] cluster</name>
        <dbReference type="ChEBI" id="CHEBI:49883"/>
    </ligand>
</feature>
<sequence>MSLEGVFKEGFVTTSYDSVVNWAKTGSLWPMTFGLACCAVEMMHAGAARYDIDRFGMLFRPSPRQSDLMIVAGTLCNKMGPALRKVYDQMAEPRWVISMGSCANGGGYYHYSYSVVRGCDRIVPVDVYVPGCPPTAEALLYGIIQLQQKIRRTNTIARA</sequence>